<feature type="chain" id="PRO_0000163393" description="Ribosome maturation factor RimM">
    <location>
        <begin position="1"/>
        <end position="170"/>
    </location>
</feature>
<feature type="domain" description="PRC barrel" evidence="1">
    <location>
        <begin position="98"/>
        <end position="170"/>
    </location>
</feature>
<sequence length="170" mass="19251">MKDNERRILLGRVVGGFGLRGEIKIESWTEPRDAIFRYQPWLLRSPTGTESMLNGARGYETGKRLIATFPGINDRNAVEAICGTEIYVPRSALPPPHPDEYYWVDLEGLQVHTLEGVVLGSVSHLFSNGANDVIVIHGERERLIPFVQPDYVKSVDFEAERIVVDWDPEF</sequence>
<organism>
    <name type="scientific">Xylella fastidiosa (strain 9a5c)</name>
    <dbReference type="NCBI Taxonomy" id="160492"/>
    <lineage>
        <taxon>Bacteria</taxon>
        <taxon>Pseudomonadati</taxon>
        <taxon>Pseudomonadota</taxon>
        <taxon>Gammaproteobacteria</taxon>
        <taxon>Lysobacterales</taxon>
        <taxon>Lysobacteraceae</taxon>
        <taxon>Xylella</taxon>
    </lineage>
</organism>
<keyword id="KW-0143">Chaperone</keyword>
<keyword id="KW-0963">Cytoplasm</keyword>
<keyword id="KW-0690">Ribosome biogenesis</keyword>
<keyword id="KW-0698">rRNA processing</keyword>
<dbReference type="EMBL" id="AE003849">
    <property type="protein sequence ID" value="AAF82921.1"/>
    <property type="molecule type" value="Genomic_DNA"/>
</dbReference>
<dbReference type="PIR" id="A82848">
    <property type="entry name" value="A82848"/>
</dbReference>
<dbReference type="RefSeq" id="WP_010892654.1">
    <property type="nucleotide sequence ID" value="NC_002488.3"/>
</dbReference>
<dbReference type="SMR" id="Q9PH38"/>
<dbReference type="STRING" id="160492.XF_0108"/>
<dbReference type="KEGG" id="xfa:XF_0108"/>
<dbReference type="eggNOG" id="COG0806">
    <property type="taxonomic scope" value="Bacteria"/>
</dbReference>
<dbReference type="HOGENOM" id="CLU_077636_1_0_6"/>
<dbReference type="Proteomes" id="UP000000812">
    <property type="component" value="Chromosome"/>
</dbReference>
<dbReference type="GO" id="GO:0005737">
    <property type="term" value="C:cytoplasm"/>
    <property type="evidence" value="ECO:0007669"/>
    <property type="project" value="UniProtKB-SubCell"/>
</dbReference>
<dbReference type="GO" id="GO:0005840">
    <property type="term" value="C:ribosome"/>
    <property type="evidence" value="ECO:0007669"/>
    <property type="project" value="InterPro"/>
</dbReference>
<dbReference type="GO" id="GO:0043022">
    <property type="term" value="F:ribosome binding"/>
    <property type="evidence" value="ECO:0007669"/>
    <property type="project" value="InterPro"/>
</dbReference>
<dbReference type="GO" id="GO:0042274">
    <property type="term" value="P:ribosomal small subunit biogenesis"/>
    <property type="evidence" value="ECO:0007669"/>
    <property type="project" value="UniProtKB-UniRule"/>
</dbReference>
<dbReference type="GO" id="GO:0006364">
    <property type="term" value="P:rRNA processing"/>
    <property type="evidence" value="ECO:0007669"/>
    <property type="project" value="UniProtKB-UniRule"/>
</dbReference>
<dbReference type="Gene3D" id="2.30.30.240">
    <property type="entry name" value="PRC-barrel domain"/>
    <property type="match status" value="1"/>
</dbReference>
<dbReference type="Gene3D" id="2.40.30.60">
    <property type="entry name" value="RimM"/>
    <property type="match status" value="1"/>
</dbReference>
<dbReference type="HAMAP" id="MF_00014">
    <property type="entry name" value="Ribosome_mat_RimM"/>
    <property type="match status" value="1"/>
</dbReference>
<dbReference type="InterPro" id="IPR011033">
    <property type="entry name" value="PRC_barrel-like_sf"/>
</dbReference>
<dbReference type="InterPro" id="IPR056792">
    <property type="entry name" value="PRC_RimM"/>
</dbReference>
<dbReference type="InterPro" id="IPR011961">
    <property type="entry name" value="RimM"/>
</dbReference>
<dbReference type="InterPro" id="IPR002676">
    <property type="entry name" value="RimM_N"/>
</dbReference>
<dbReference type="InterPro" id="IPR036976">
    <property type="entry name" value="RimM_N_sf"/>
</dbReference>
<dbReference type="InterPro" id="IPR009000">
    <property type="entry name" value="Transl_B-barrel_sf"/>
</dbReference>
<dbReference type="NCBIfam" id="TIGR02273">
    <property type="entry name" value="16S_RimM"/>
    <property type="match status" value="1"/>
</dbReference>
<dbReference type="PANTHER" id="PTHR33692">
    <property type="entry name" value="RIBOSOME MATURATION FACTOR RIMM"/>
    <property type="match status" value="1"/>
</dbReference>
<dbReference type="PANTHER" id="PTHR33692:SF1">
    <property type="entry name" value="RIBOSOME MATURATION FACTOR RIMM"/>
    <property type="match status" value="1"/>
</dbReference>
<dbReference type="Pfam" id="PF24986">
    <property type="entry name" value="PRC_RimM"/>
    <property type="match status" value="1"/>
</dbReference>
<dbReference type="Pfam" id="PF01782">
    <property type="entry name" value="RimM"/>
    <property type="match status" value="1"/>
</dbReference>
<dbReference type="SUPFAM" id="SSF50346">
    <property type="entry name" value="PRC-barrel domain"/>
    <property type="match status" value="1"/>
</dbReference>
<dbReference type="SUPFAM" id="SSF50447">
    <property type="entry name" value="Translation proteins"/>
    <property type="match status" value="1"/>
</dbReference>
<reference key="1">
    <citation type="journal article" date="2000" name="Nature">
        <title>The genome sequence of the plant pathogen Xylella fastidiosa.</title>
        <authorList>
            <person name="Simpson A.J.G."/>
            <person name="Reinach F.C."/>
            <person name="Arruda P."/>
            <person name="Abreu F.A."/>
            <person name="Acencio M."/>
            <person name="Alvarenga R."/>
            <person name="Alves L.M.C."/>
            <person name="Araya J.E."/>
            <person name="Baia G.S."/>
            <person name="Baptista C.S."/>
            <person name="Barros M.H."/>
            <person name="Bonaccorsi E.D."/>
            <person name="Bordin S."/>
            <person name="Bove J.M."/>
            <person name="Briones M.R.S."/>
            <person name="Bueno M.R.P."/>
            <person name="Camargo A.A."/>
            <person name="Camargo L.E.A."/>
            <person name="Carraro D.M."/>
            <person name="Carrer H."/>
            <person name="Colauto N.B."/>
            <person name="Colombo C."/>
            <person name="Costa F.F."/>
            <person name="Costa M.C.R."/>
            <person name="Costa-Neto C.M."/>
            <person name="Coutinho L.L."/>
            <person name="Cristofani M."/>
            <person name="Dias-Neto E."/>
            <person name="Docena C."/>
            <person name="El-Dorry H."/>
            <person name="Facincani A.P."/>
            <person name="Ferreira A.J.S."/>
            <person name="Ferreira V.C.A."/>
            <person name="Ferro J.A."/>
            <person name="Fraga J.S."/>
            <person name="Franca S.C."/>
            <person name="Franco M.C."/>
            <person name="Frohme M."/>
            <person name="Furlan L.R."/>
            <person name="Garnier M."/>
            <person name="Goldman G.H."/>
            <person name="Goldman M.H.S."/>
            <person name="Gomes S.L."/>
            <person name="Gruber A."/>
            <person name="Ho P.L."/>
            <person name="Hoheisel J.D."/>
            <person name="Junqueira M.L."/>
            <person name="Kemper E.L."/>
            <person name="Kitajima J.P."/>
            <person name="Krieger J.E."/>
            <person name="Kuramae E.E."/>
            <person name="Laigret F."/>
            <person name="Lambais M.R."/>
            <person name="Leite L.C.C."/>
            <person name="Lemos E.G.M."/>
            <person name="Lemos M.V.F."/>
            <person name="Lopes S.A."/>
            <person name="Lopes C.R."/>
            <person name="Machado J.A."/>
            <person name="Machado M.A."/>
            <person name="Madeira A.M.B.N."/>
            <person name="Madeira H.M.F."/>
            <person name="Marino C.L."/>
            <person name="Marques M.V."/>
            <person name="Martins E.A.L."/>
            <person name="Martins E.M.F."/>
            <person name="Matsukuma A.Y."/>
            <person name="Menck C.F.M."/>
            <person name="Miracca E.C."/>
            <person name="Miyaki C.Y."/>
            <person name="Monteiro-Vitorello C.B."/>
            <person name="Moon D.H."/>
            <person name="Nagai M.A."/>
            <person name="Nascimento A.L.T.O."/>
            <person name="Netto L.E.S."/>
            <person name="Nhani A. Jr."/>
            <person name="Nobrega F.G."/>
            <person name="Nunes L.R."/>
            <person name="Oliveira M.A."/>
            <person name="de Oliveira M.C."/>
            <person name="de Oliveira R.C."/>
            <person name="Palmieri D.A."/>
            <person name="Paris A."/>
            <person name="Peixoto B.R."/>
            <person name="Pereira G.A.G."/>
            <person name="Pereira H.A. Jr."/>
            <person name="Pesquero J.B."/>
            <person name="Quaggio R.B."/>
            <person name="Roberto P.G."/>
            <person name="Rodrigues V."/>
            <person name="de Rosa A.J.M."/>
            <person name="de Rosa V.E. Jr."/>
            <person name="de Sa R.G."/>
            <person name="Santelli R.V."/>
            <person name="Sawasaki H.E."/>
            <person name="da Silva A.C.R."/>
            <person name="da Silva A.M."/>
            <person name="da Silva F.R."/>
            <person name="Silva W.A. Jr."/>
            <person name="da Silveira J.F."/>
            <person name="Silvestri M.L.Z."/>
            <person name="Siqueira W.J."/>
            <person name="de Souza A.A."/>
            <person name="de Souza A.P."/>
            <person name="Terenzi M.F."/>
            <person name="Truffi D."/>
            <person name="Tsai S.M."/>
            <person name="Tsuhako M.H."/>
            <person name="Vallada H."/>
            <person name="Van Sluys M.A."/>
            <person name="Verjovski-Almeida S."/>
            <person name="Vettore A.L."/>
            <person name="Zago M.A."/>
            <person name="Zatz M."/>
            <person name="Meidanis J."/>
            <person name="Setubal J.C."/>
        </authorList>
    </citation>
    <scope>NUCLEOTIDE SEQUENCE [LARGE SCALE GENOMIC DNA]</scope>
    <source>
        <strain>9a5c</strain>
    </source>
</reference>
<gene>
    <name evidence="1" type="primary">rimM</name>
    <name type="ordered locus">XF_0108</name>
</gene>
<evidence type="ECO:0000255" key="1">
    <source>
        <dbReference type="HAMAP-Rule" id="MF_00014"/>
    </source>
</evidence>
<comment type="function">
    <text evidence="1">An accessory protein needed during the final step in the assembly of 30S ribosomal subunit, possibly for assembly of the head region. Essential for efficient processing of 16S rRNA. May be needed both before and after RbfA during the maturation of 16S rRNA. It has affinity for free ribosomal 30S subunits but not for 70S ribosomes.</text>
</comment>
<comment type="subunit">
    <text evidence="1">Binds ribosomal protein uS19.</text>
</comment>
<comment type="subcellular location">
    <subcellularLocation>
        <location evidence="1">Cytoplasm</location>
    </subcellularLocation>
</comment>
<comment type="domain">
    <text evidence="1">The PRC barrel domain binds ribosomal protein uS19.</text>
</comment>
<comment type="similarity">
    <text evidence="1">Belongs to the RimM family.</text>
</comment>
<accession>Q9PH38</accession>
<name>RIMM_XYLFA</name>
<protein>
    <recommendedName>
        <fullName evidence="1">Ribosome maturation factor RimM</fullName>
    </recommendedName>
</protein>
<proteinExistence type="inferred from homology"/>